<reference key="1">
    <citation type="journal article" date="1997" name="Nature">
        <title>Genomic sequence of a Lyme disease spirochaete, Borrelia burgdorferi.</title>
        <authorList>
            <person name="Fraser C.M."/>
            <person name="Casjens S."/>
            <person name="Huang W.M."/>
            <person name="Sutton G.G."/>
            <person name="Clayton R.A."/>
            <person name="Lathigra R."/>
            <person name="White O."/>
            <person name="Ketchum K.A."/>
            <person name="Dodson R.J."/>
            <person name="Hickey E.K."/>
            <person name="Gwinn M.L."/>
            <person name="Dougherty B.A."/>
            <person name="Tomb J.-F."/>
            <person name="Fleischmann R.D."/>
            <person name="Richardson D.L."/>
            <person name="Peterson J.D."/>
            <person name="Kerlavage A.R."/>
            <person name="Quackenbush J."/>
            <person name="Salzberg S.L."/>
            <person name="Hanson M."/>
            <person name="van Vugt R."/>
            <person name="Palmer N."/>
            <person name="Adams M.D."/>
            <person name="Gocayne J.D."/>
            <person name="Weidman J.F."/>
            <person name="Utterback T.R."/>
            <person name="Watthey L."/>
            <person name="McDonald L.A."/>
            <person name="Artiach P."/>
            <person name="Bowman C."/>
            <person name="Garland S.A."/>
            <person name="Fujii C."/>
            <person name="Cotton M.D."/>
            <person name="Horst K."/>
            <person name="Roberts K.M."/>
            <person name="Hatch B."/>
            <person name="Smith H.O."/>
            <person name="Venter J.C."/>
        </authorList>
    </citation>
    <scope>NUCLEOTIDE SEQUENCE [LARGE SCALE GENOMIC DNA]</scope>
    <source>
        <strain>ATCC 35210 / DSM 4680 / CIP 102532 / B31</strain>
    </source>
</reference>
<keyword id="KW-1185">Reference proteome</keyword>
<protein>
    <recommendedName>
        <fullName>Uncharacterized protein BB_0097</fullName>
    </recommendedName>
</protein>
<name>Y097_BORBU</name>
<gene>
    <name type="ordered locus">BB_0097</name>
</gene>
<dbReference type="EMBL" id="AE000783">
    <property type="protein sequence ID" value="AAC66488.1"/>
    <property type="molecule type" value="Genomic_DNA"/>
</dbReference>
<dbReference type="PIR" id="A70112">
    <property type="entry name" value="A70112"/>
</dbReference>
<dbReference type="RefSeq" id="NP_212231.1">
    <property type="nucleotide sequence ID" value="NC_001318.1"/>
</dbReference>
<dbReference type="RefSeq" id="WP_002556699.1">
    <property type="nucleotide sequence ID" value="NC_001318.1"/>
</dbReference>
<dbReference type="STRING" id="224326.BB_0097"/>
<dbReference type="PaxDb" id="224326-BB_0097"/>
<dbReference type="EnsemblBacteria" id="AAC66488">
    <property type="protein sequence ID" value="AAC66488"/>
    <property type="gene ID" value="BB_0097"/>
</dbReference>
<dbReference type="KEGG" id="bbu:BB_0097"/>
<dbReference type="PATRIC" id="fig|224326.49.peg.495"/>
<dbReference type="HOGENOM" id="CLU_1916148_0_0_12"/>
<dbReference type="OrthoDB" id="350508at2"/>
<dbReference type="Proteomes" id="UP000001807">
    <property type="component" value="Chromosome"/>
</dbReference>
<organism>
    <name type="scientific">Borreliella burgdorferi (strain ATCC 35210 / DSM 4680 / CIP 102532 / B31)</name>
    <name type="common">Borrelia burgdorferi</name>
    <dbReference type="NCBI Taxonomy" id="224326"/>
    <lineage>
        <taxon>Bacteria</taxon>
        <taxon>Pseudomonadati</taxon>
        <taxon>Spirochaetota</taxon>
        <taxon>Spirochaetia</taxon>
        <taxon>Spirochaetales</taxon>
        <taxon>Borreliaceae</taxon>
        <taxon>Borreliella</taxon>
    </lineage>
</organism>
<feature type="chain" id="PRO_0000174383" description="Uncharacterized protein BB_0097">
    <location>
        <begin position="1"/>
        <end position="128"/>
    </location>
</feature>
<proteinExistence type="predicted"/>
<accession>O51124</accession>
<sequence>MNISKFNEFENVLFHICLDVDFVLENEFGNSYDIHPNRPFRGKAANGLLDGLFSVTTTFTSGYGSRFGRGYLIIIEILTLNFVDDEFWDKINKRGIEIFREGLKNKFPSKNLDIVLDGNVYKIIGPFF</sequence>